<accession>P0DTZ1</accession>
<feature type="signal peptide" evidence="1">
    <location>
        <begin position="1"/>
        <end position="22"/>
    </location>
</feature>
<feature type="chain" id="PRO_0000450973" description="Conotoxin Cal6.29" evidence="3">
    <location>
        <begin position="23"/>
        <end position="60"/>
    </location>
</feature>
<feature type="disulfide bond" evidence="3">
    <location>
        <begin position="33"/>
        <end position="50"/>
    </location>
</feature>
<feature type="disulfide bond" evidence="3">
    <location>
        <begin position="40"/>
        <end position="54"/>
    </location>
</feature>
<feature type="disulfide bond" evidence="3">
    <location>
        <begin position="49"/>
        <end position="58"/>
    </location>
</feature>
<sequence length="60" mass="6525">MKLTCVLIVAVLVLTACQFTAAISQTQRLSKKCIEDNHACGLLHHSPYCCNGTCFIVCIP</sequence>
<comment type="function">
    <text evidence="3">Probable neurotoxin.</text>
</comment>
<comment type="subcellular location">
    <subcellularLocation>
        <location evidence="4">Secreted</location>
    </subcellularLocation>
</comment>
<comment type="tissue specificity">
    <text evidence="4">Expressed by the venom duct.</text>
</comment>
<comment type="domain">
    <text evidence="3">The cysteine framework is VI/VII (C-C-CC-C-C).</text>
</comment>
<comment type="domain">
    <text evidence="3">The presence of a 'disulfide through disulfide knot' structurally defines this protein as a knottin.</text>
</comment>
<comment type="similarity">
    <text evidence="3">Belongs to the conotoxin O1 superfamily.</text>
</comment>
<organism>
    <name type="scientific">Californiconus californicus</name>
    <name type="common">California cone</name>
    <name type="synonym">Conus californicus</name>
    <dbReference type="NCBI Taxonomy" id="1736779"/>
    <lineage>
        <taxon>Eukaryota</taxon>
        <taxon>Metazoa</taxon>
        <taxon>Spiralia</taxon>
        <taxon>Lophotrochozoa</taxon>
        <taxon>Mollusca</taxon>
        <taxon>Gastropoda</taxon>
        <taxon>Caenogastropoda</taxon>
        <taxon>Neogastropoda</taxon>
        <taxon>Conoidea</taxon>
        <taxon>Conidae</taxon>
        <taxon>Californiconus</taxon>
    </lineage>
</organism>
<protein>
    <recommendedName>
        <fullName evidence="3">Conotoxin Cal6.29</fullName>
    </recommendedName>
    <alternativeName>
        <fullName evidence="2">O1_cal6.29</fullName>
    </alternativeName>
</protein>
<keyword id="KW-1015">Disulfide bond</keyword>
<keyword id="KW-0960">Knottin</keyword>
<keyword id="KW-0528">Neurotoxin</keyword>
<keyword id="KW-0964">Secreted</keyword>
<keyword id="KW-0732">Signal</keyword>
<keyword id="KW-0800">Toxin</keyword>
<dbReference type="GO" id="GO:0005576">
    <property type="term" value="C:extracellular region"/>
    <property type="evidence" value="ECO:0007669"/>
    <property type="project" value="UniProtKB-SubCell"/>
</dbReference>
<dbReference type="GO" id="GO:0090729">
    <property type="term" value="F:toxin activity"/>
    <property type="evidence" value="ECO:0007669"/>
    <property type="project" value="UniProtKB-KW"/>
</dbReference>
<proteinExistence type="inferred from homology"/>
<name>O1629_CONCL</name>
<evidence type="ECO:0000255" key="1"/>
<evidence type="ECO:0000303" key="2">
    <source>
    </source>
</evidence>
<evidence type="ECO:0000305" key="3"/>
<evidence type="ECO:0000305" key="4">
    <source>
    </source>
</evidence>
<reference key="1">
    <citation type="journal article" date="2019" name="Toxins">
        <title>The diversified O-superfamily in Californiconus californicus presents a conotoxin with antimycobacterial activity.</title>
        <authorList>
            <person name="Bernaldez-Sarabia J."/>
            <person name="Figueroa-Montiel A."/>
            <person name="Duenas S."/>
            <person name="Cervantes-Luevano K."/>
            <person name="Beltran J.A."/>
            <person name="Ortiz E."/>
            <person name="Jimenez S."/>
            <person name="Possani L.D."/>
            <person name="Paniagua-Solis J.F."/>
            <person name="Gonzalez-Canudas J."/>
            <person name="Licea-Navarro A."/>
        </authorList>
    </citation>
    <scope>NUCLEOTIDE SEQUENCE [MRNA]</scope>
    <source>
        <tissue>Venom duct</tissue>
    </source>
</reference>